<sequence length="191" mass="20914">MAVKIIVGLGNPGPKYQWTRHNAGFMVLDRLSHLAGIAISKKTFSGVCGEGNWQGERLILLKPQTFMNLSGRSAAEAIRFHKLPIEDLIVIHDDLDIPFGRVKLKQGGGHAGHNGLRSLAQELGSGDFVRVRVGIGRPVHGDVVNYVLNNFSPEEMASLPRLLDGVVDLVEMLAREGLPKTMSLYNNKDLI</sequence>
<proteinExistence type="inferred from homology"/>
<keyword id="KW-0963">Cytoplasm</keyword>
<keyword id="KW-0378">Hydrolase</keyword>
<keyword id="KW-1185">Reference proteome</keyword>
<keyword id="KW-0694">RNA-binding</keyword>
<keyword id="KW-0820">tRNA-binding</keyword>
<evidence type="ECO:0000255" key="1">
    <source>
        <dbReference type="HAMAP-Rule" id="MF_00083"/>
    </source>
</evidence>
<gene>
    <name evidence="1" type="primary">pth</name>
    <name type="ordered locus">Geob_1568</name>
</gene>
<name>PTH_GEODF</name>
<reference key="1">
    <citation type="submission" date="2009-01" db="EMBL/GenBank/DDBJ databases">
        <title>Complete sequence of Geobacter sp. FRC-32.</title>
        <authorList>
            <consortium name="US DOE Joint Genome Institute"/>
            <person name="Lucas S."/>
            <person name="Copeland A."/>
            <person name="Lapidus A."/>
            <person name="Glavina del Rio T."/>
            <person name="Dalin E."/>
            <person name="Tice H."/>
            <person name="Bruce D."/>
            <person name="Goodwin L."/>
            <person name="Pitluck S."/>
            <person name="Saunders E."/>
            <person name="Brettin T."/>
            <person name="Detter J.C."/>
            <person name="Han C."/>
            <person name="Larimer F."/>
            <person name="Land M."/>
            <person name="Hauser L."/>
            <person name="Kyrpides N."/>
            <person name="Ovchinnikova G."/>
            <person name="Kostka J."/>
            <person name="Richardson P."/>
        </authorList>
    </citation>
    <scope>NUCLEOTIDE SEQUENCE [LARGE SCALE GENOMIC DNA]</scope>
    <source>
        <strain>DSM 22248 / JCM 15807 / FRC-32</strain>
    </source>
</reference>
<feature type="chain" id="PRO_1000118392" description="Peptidyl-tRNA hydrolase">
    <location>
        <begin position="1"/>
        <end position="191"/>
    </location>
</feature>
<feature type="active site" description="Proton acceptor" evidence="1">
    <location>
        <position position="21"/>
    </location>
</feature>
<feature type="binding site" evidence="1">
    <location>
        <position position="16"/>
    </location>
    <ligand>
        <name>tRNA</name>
        <dbReference type="ChEBI" id="CHEBI:17843"/>
    </ligand>
</feature>
<feature type="binding site" evidence="1">
    <location>
        <position position="66"/>
    </location>
    <ligand>
        <name>tRNA</name>
        <dbReference type="ChEBI" id="CHEBI:17843"/>
    </ligand>
</feature>
<feature type="binding site" evidence="1">
    <location>
        <position position="68"/>
    </location>
    <ligand>
        <name>tRNA</name>
        <dbReference type="ChEBI" id="CHEBI:17843"/>
    </ligand>
</feature>
<feature type="binding site" evidence="1">
    <location>
        <position position="114"/>
    </location>
    <ligand>
        <name>tRNA</name>
        <dbReference type="ChEBI" id="CHEBI:17843"/>
    </ligand>
</feature>
<feature type="site" description="Discriminates between blocked and unblocked aminoacyl-tRNA" evidence="1">
    <location>
        <position position="11"/>
    </location>
</feature>
<feature type="site" description="Stabilizes the basic form of H active site to accept a proton" evidence="1">
    <location>
        <position position="93"/>
    </location>
</feature>
<comment type="function">
    <text evidence="1">Hydrolyzes ribosome-free peptidyl-tRNAs (with 1 or more amino acids incorporated), which drop off the ribosome during protein synthesis, or as a result of ribosome stalling.</text>
</comment>
<comment type="function">
    <text evidence="1">Catalyzes the release of premature peptidyl moieties from peptidyl-tRNA molecules trapped in stalled 50S ribosomal subunits, and thus maintains levels of free tRNAs and 50S ribosomes.</text>
</comment>
<comment type="catalytic activity">
    <reaction evidence="1">
        <text>an N-acyl-L-alpha-aminoacyl-tRNA + H2O = an N-acyl-L-amino acid + a tRNA + H(+)</text>
        <dbReference type="Rhea" id="RHEA:54448"/>
        <dbReference type="Rhea" id="RHEA-COMP:10123"/>
        <dbReference type="Rhea" id="RHEA-COMP:13883"/>
        <dbReference type="ChEBI" id="CHEBI:15377"/>
        <dbReference type="ChEBI" id="CHEBI:15378"/>
        <dbReference type="ChEBI" id="CHEBI:59874"/>
        <dbReference type="ChEBI" id="CHEBI:78442"/>
        <dbReference type="ChEBI" id="CHEBI:138191"/>
        <dbReference type="EC" id="3.1.1.29"/>
    </reaction>
</comment>
<comment type="subunit">
    <text evidence="1">Monomer.</text>
</comment>
<comment type="subcellular location">
    <subcellularLocation>
        <location evidence="1">Cytoplasm</location>
    </subcellularLocation>
</comment>
<comment type="similarity">
    <text evidence="1">Belongs to the PTH family.</text>
</comment>
<accession>B9M5U5</accession>
<organism>
    <name type="scientific">Geotalea daltonii (strain DSM 22248 / JCM 15807 / FRC-32)</name>
    <name type="common">Geobacter daltonii</name>
    <dbReference type="NCBI Taxonomy" id="316067"/>
    <lineage>
        <taxon>Bacteria</taxon>
        <taxon>Pseudomonadati</taxon>
        <taxon>Thermodesulfobacteriota</taxon>
        <taxon>Desulfuromonadia</taxon>
        <taxon>Geobacterales</taxon>
        <taxon>Geobacteraceae</taxon>
        <taxon>Geotalea</taxon>
    </lineage>
</organism>
<dbReference type="EC" id="3.1.1.29" evidence="1"/>
<dbReference type="EMBL" id="CP001390">
    <property type="protein sequence ID" value="ACM19926.1"/>
    <property type="molecule type" value="Genomic_DNA"/>
</dbReference>
<dbReference type="RefSeq" id="WP_012646655.1">
    <property type="nucleotide sequence ID" value="NC_011979.1"/>
</dbReference>
<dbReference type="SMR" id="B9M5U5"/>
<dbReference type="STRING" id="316067.Geob_1568"/>
<dbReference type="KEGG" id="geo:Geob_1568"/>
<dbReference type="eggNOG" id="COG0193">
    <property type="taxonomic scope" value="Bacteria"/>
</dbReference>
<dbReference type="HOGENOM" id="CLU_062456_4_1_7"/>
<dbReference type="OrthoDB" id="9800507at2"/>
<dbReference type="Proteomes" id="UP000007721">
    <property type="component" value="Chromosome"/>
</dbReference>
<dbReference type="GO" id="GO:0005737">
    <property type="term" value="C:cytoplasm"/>
    <property type="evidence" value="ECO:0007669"/>
    <property type="project" value="UniProtKB-SubCell"/>
</dbReference>
<dbReference type="GO" id="GO:0004045">
    <property type="term" value="F:peptidyl-tRNA hydrolase activity"/>
    <property type="evidence" value="ECO:0007669"/>
    <property type="project" value="UniProtKB-UniRule"/>
</dbReference>
<dbReference type="GO" id="GO:0000049">
    <property type="term" value="F:tRNA binding"/>
    <property type="evidence" value="ECO:0007669"/>
    <property type="project" value="UniProtKB-UniRule"/>
</dbReference>
<dbReference type="GO" id="GO:0006515">
    <property type="term" value="P:protein quality control for misfolded or incompletely synthesized proteins"/>
    <property type="evidence" value="ECO:0007669"/>
    <property type="project" value="UniProtKB-UniRule"/>
</dbReference>
<dbReference type="GO" id="GO:0072344">
    <property type="term" value="P:rescue of stalled ribosome"/>
    <property type="evidence" value="ECO:0007669"/>
    <property type="project" value="UniProtKB-UniRule"/>
</dbReference>
<dbReference type="CDD" id="cd00462">
    <property type="entry name" value="PTH"/>
    <property type="match status" value="1"/>
</dbReference>
<dbReference type="FunFam" id="3.40.50.1470:FF:000001">
    <property type="entry name" value="Peptidyl-tRNA hydrolase"/>
    <property type="match status" value="1"/>
</dbReference>
<dbReference type="Gene3D" id="3.40.50.1470">
    <property type="entry name" value="Peptidyl-tRNA hydrolase"/>
    <property type="match status" value="1"/>
</dbReference>
<dbReference type="HAMAP" id="MF_00083">
    <property type="entry name" value="Pept_tRNA_hydro_bact"/>
    <property type="match status" value="1"/>
</dbReference>
<dbReference type="InterPro" id="IPR001328">
    <property type="entry name" value="Pept_tRNA_hydro"/>
</dbReference>
<dbReference type="InterPro" id="IPR018171">
    <property type="entry name" value="Pept_tRNA_hydro_CS"/>
</dbReference>
<dbReference type="InterPro" id="IPR036416">
    <property type="entry name" value="Pept_tRNA_hydro_sf"/>
</dbReference>
<dbReference type="NCBIfam" id="TIGR00447">
    <property type="entry name" value="pth"/>
    <property type="match status" value="1"/>
</dbReference>
<dbReference type="PANTHER" id="PTHR17224">
    <property type="entry name" value="PEPTIDYL-TRNA HYDROLASE"/>
    <property type="match status" value="1"/>
</dbReference>
<dbReference type="PANTHER" id="PTHR17224:SF1">
    <property type="entry name" value="PEPTIDYL-TRNA HYDROLASE"/>
    <property type="match status" value="1"/>
</dbReference>
<dbReference type="Pfam" id="PF01195">
    <property type="entry name" value="Pept_tRNA_hydro"/>
    <property type="match status" value="1"/>
</dbReference>
<dbReference type="SUPFAM" id="SSF53178">
    <property type="entry name" value="Peptidyl-tRNA hydrolase-like"/>
    <property type="match status" value="1"/>
</dbReference>
<dbReference type="PROSITE" id="PS01195">
    <property type="entry name" value="PEPT_TRNA_HYDROL_1"/>
    <property type="match status" value="1"/>
</dbReference>
<dbReference type="PROSITE" id="PS01196">
    <property type="entry name" value="PEPT_TRNA_HYDROL_2"/>
    <property type="match status" value="1"/>
</dbReference>
<protein>
    <recommendedName>
        <fullName evidence="1">Peptidyl-tRNA hydrolase</fullName>
        <shortName evidence="1">Pth</shortName>
        <ecNumber evidence="1">3.1.1.29</ecNumber>
    </recommendedName>
</protein>